<keyword id="KW-0903">Direct protein sequencing</keyword>
<keyword id="KW-1015">Disulfide bond</keyword>
<keyword id="KW-0708">Seed storage protein</keyword>
<keyword id="KW-0732">Signal</keyword>
<keyword id="KW-0758">Storage protein</keyword>
<name>2SS5_HELAN</name>
<feature type="signal peptide" evidence="1">
    <location>
        <begin position="1"/>
        <end position="20"/>
    </location>
</feature>
<feature type="propeptide" id="PRO_0000032151" evidence="1">
    <location>
        <begin position="21"/>
        <end position="161"/>
    </location>
</feature>
<feature type="chain" id="PRO_0000032152" description="2S seed storage protein">
    <location>
        <begin position="162"/>
        <end position="295"/>
    </location>
</feature>
<feature type="region of interest" description="Disordered" evidence="2">
    <location>
        <begin position="195"/>
        <end position="215"/>
    </location>
</feature>
<feature type="compositionally biased region" description="Polar residues" evidence="2">
    <location>
        <begin position="195"/>
        <end position="208"/>
    </location>
</feature>
<comment type="function">
    <text>This is a 2S seed storage protein.</text>
</comment>
<comment type="PTM">
    <text>The 38 kDa precursor may be cleaved into two polypeptides of approximately the same size. The mature protein is composed of a single polypeptide containing one or more intra-molecular disulfide linkages.</text>
</comment>
<comment type="similarity">
    <text evidence="3">Belongs to the 2S seed storage albumins family.</text>
</comment>
<protein>
    <recommendedName>
        <fullName>2S seed storage protein</fullName>
    </recommendedName>
    <alternativeName>
        <fullName>2S albumin storage protein</fullName>
    </alternativeName>
</protein>
<accession>P15461</accession>
<gene>
    <name type="primary">HAG5</name>
</gene>
<dbReference type="EMBL" id="X06410">
    <property type="protein sequence ID" value="CAA29699.1"/>
    <property type="molecule type" value="Genomic_DNA"/>
</dbReference>
<dbReference type="PIR" id="S01062">
    <property type="entry name" value="S01062"/>
</dbReference>
<dbReference type="SMR" id="P15461"/>
<dbReference type="GO" id="GO:0045735">
    <property type="term" value="F:nutrient reservoir activity"/>
    <property type="evidence" value="ECO:0007669"/>
    <property type="project" value="UniProtKB-KW"/>
</dbReference>
<dbReference type="Gene3D" id="1.10.110.10">
    <property type="entry name" value="Plant lipid-transfer and hydrophobic proteins"/>
    <property type="match status" value="2"/>
</dbReference>
<dbReference type="InterPro" id="IPR036312">
    <property type="entry name" value="Bifun_inhib/LTP/seed_sf"/>
</dbReference>
<dbReference type="InterPro" id="IPR016140">
    <property type="entry name" value="Bifunc_inhib/LTP/seed_store"/>
</dbReference>
<dbReference type="InterPro" id="IPR000617">
    <property type="entry name" value="Napin/2SS/CON"/>
</dbReference>
<dbReference type="PANTHER" id="PTHR35496">
    <property type="entry name" value="2S SEED STORAGE PROTEIN 1-RELATED"/>
    <property type="match status" value="1"/>
</dbReference>
<dbReference type="PANTHER" id="PTHR35496:SF4">
    <property type="entry name" value="2S SULFUR-RICH SEED STORAGE PROTEIN 2-LIKE"/>
    <property type="match status" value="1"/>
</dbReference>
<dbReference type="Pfam" id="PF00234">
    <property type="entry name" value="Tryp_alpha_amyl"/>
    <property type="match status" value="2"/>
</dbReference>
<dbReference type="PRINTS" id="PR00496">
    <property type="entry name" value="NAPIN"/>
</dbReference>
<dbReference type="SMART" id="SM00499">
    <property type="entry name" value="AAI"/>
    <property type="match status" value="2"/>
</dbReference>
<dbReference type="SUPFAM" id="SSF47699">
    <property type="entry name" value="Bifunctional inhibitor/lipid-transfer protein/seed storage 2S albumin"/>
    <property type="match status" value="2"/>
</dbReference>
<organism>
    <name type="scientific">Helianthus annuus</name>
    <name type="common">Common sunflower</name>
    <dbReference type="NCBI Taxonomy" id="4232"/>
    <lineage>
        <taxon>Eukaryota</taxon>
        <taxon>Viridiplantae</taxon>
        <taxon>Streptophyta</taxon>
        <taxon>Embryophyta</taxon>
        <taxon>Tracheophyta</taxon>
        <taxon>Spermatophyta</taxon>
        <taxon>Magnoliopsida</taxon>
        <taxon>eudicotyledons</taxon>
        <taxon>Gunneridae</taxon>
        <taxon>Pentapetalae</taxon>
        <taxon>asterids</taxon>
        <taxon>campanulids</taxon>
        <taxon>Asterales</taxon>
        <taxon>Asteraceae</taxon>
        <taxon>Asteroideae</taxon>
        <taxon>Heliantheae alliance</taxon>
        <taxon>Heliantheae</taxon>
        <taxon>Helianthus</taxon>
    </lineage>
</organism>
<evidence type="ECO:0000255" key="1"/>
<evidence type="ECO:0000256" key="2">
    <source>
        <dbReference type="SAM" id="MobiDB-lite"/>
    </source>
</evidence>
<evidence type="ECO:0000305" key="3"/>
<reference key="1">
    <citation type="journal article" date="1987" name="Mol. Gen. Genet.">
        <title>Sequence and expression of a gene encoding an albumin storage protein in sunflower.</title>
        <authorList>
            <person name="Allen R.D."/>
            <person name="Cohen E.A."/>
            <person name="Vonder Haar R.A."/>
            <person name="Adams C.A."/>
            <person name="Ma D.P."/>
            <person name="Nessler C.L."/>
            <person name="Thomas T.L."/>
        </authorList>
    </citation>
    <scope>NUCLEOTIDE SEQUENCE [GENOMIC DNA]</scope>
    <scope>PROTEIN SEQUENCE OF 162-173</scope>
    <source>
        <strain>cv. Giant grey stripe</strain>
    </source>
</reference>
<sequence length="295" mass="34071">MAKQIVLALAFAALVAFATAHTTIITTTIEDENPISGQRQVSQRIQGQRLNQCRMFLQQGQNIPREFDNPQMGRQQEQQLQQCCQELQNIEGQCQCEAVKQVFREAQQQVQQQQGRQLVPFRGSQQTQQLKQKAQILPNVCNLQSRRCEIGTITTTVTESNIDIPFRDRPFGTGSQQCRETEIQRPVGECQRFVEQQMQQSPRSTRPYQQRPGQQQQQQRGLQQQCCNELQNVKRECHCEAIQEVARRVMRQPQQQQQQRRGQFGGQEMETARRVIQNLPNQCDLEVQQCTTCTG</sequence>
<proteinExistence type="evidence at protein level"/>